<gene>
    <name type="primary">TM1</name>
</gene>
<protein>
    <recommendedName>
        <fullName>Tropomyosin</fullName>
    </recommendedName>
    <allergenName>Hom a 1</allergenName>
</protein>
<dbReference type="EMBL" id="AF034953">
    <property type="protein sequence ID" value="AAC48287.1"/>
    <property type="molecule type" value="mRNA"/>
</dbReference>
<dbReference type="EMBL" id="AF034954">
    <property type="protein sequence ID" value="AAC48288.1"/>
    <property type="molecule type" value="mRNA"/>
</dbReference>
<dbReference type="PIR" id="S74168">
    <property type="entry name" value="S74168"/>
</dbReference>
<dbReference type="SMR" id="O44119"/>
<dbReference type="Allergome" id="3320">
    <property type="allergen name" value="Hom a 1.0101"/>
</dbReference>
<dbReference type="Allergome" id="3321">
    <property type="allergen name" value="Hom a 1.0102"/>
</dbReference>
<dbReference type="Allergome" id="410">
    <property type="allergen name" value="Hom a 1"/>
</dbReference>
<dbReference type="EnsemblMetazoa" id="XM_042385142.1">
    <molecule id="O44119-2"/>
    <property type="protein sequence ID" value="XP_042241076.1"/>
    <property type="gene ID" value="LOC121878757"/>
</dbReference>
<dbReference type="EnsemblMetazoa" id="XM_042385144.1">
    <molecule id="O44119-1"/>
    <property type="protein sequence ID" value="XP_042241078.1"/>
    <property type="gene ID" value="LOC121878757"/>
</dbReference>
<dbReference type="EnsemblMetazoa" id="XM_042385153.1">
    <molecule id="O44119-2"/>
    <property type="protein sequence ID" value="XP_042241087.1"/>
    <property type="gene ID" value="LOC121878757"/>
</dbReference>
<dbReference type="OrthoDB" id="128924at2759"/>
<dbReference type="FunFam" id="1.20.5.170:FF:000005">
    <property type="entry name" value="Tropomyosin alpha-1 chain"/>
    <property type="match status" value="1"/>
</dbReference>
<dbReference type="FunFam" id="1.20.5.170:FF:000001">
    <property type="entry name" value="Tropomyosin alpha-1 chain isoform 1"/>
    <property type="match status" value="1"/>
</dbReference>
<dbReference type="FunFam" id="1.20.5.340:FF:000001">
    <property type="entry name" value="Tropomyosin alpha-1 chain isoform 2"/>
    <property type="match status" value="1"/>
</dbReference>
<dbReference type="Gene3D" id="1.20.5.170">
    <property type="match status" value="2"/>
</dbReference>
<dbReference type="Gene3D" id="1.20.5.340">
    <property type="match status" value="1"/>
</dbReference>
<dbReference type="InterPro" id="IPR000533">
    <property type="entry name" value="Tropomyosin"/>
</dbReference>
<dbReference type="PANTHER" id="PTHR19269">
    <property type="entry name" value="TROPOMYOSIN"/>
    <property type="match status" value="1"/>
</dbReference>
<dbReference type="Pfam" id="PF00261">
    <property type="entry name" value="Tropomyosin"/>
    <property type="match status" value="1"/>
</dbReference>
<dbReference type="PRINTS" id="PR00194">
    <property type="entry name" value="TROPOMYOSIN"/>
</dbReference>
<dbReference type="SUPFAM" id="SSF57997">
    <property type="entry name" value="Tropomyosin"/>
    <property type="match status" value="1"/>
</dbReference>
<dbReference type="PROSITE" id="PS00326">
    <property type="entry name" value="TROPOMYOSIN"/>
    <property type="match status" value="1"/>
</dbReference>
<proteinExistence type="evidence at protein level"/>
<reference key="1">
    <citation type="journal article" date="1998" name="J. Muscle Res. Cell Motil.">
        <title>Cloning of tropomyosins from lobster (Homarus americanus) striated muscles: fast and slow isoforms may be generated from the same transcript.</title>
        <authorList>
            <person name="Mykles D.L."/>
            <person name="Cotton J.L.S."/>
            <person name="Taniguchi H."/>
            <person name="Sano K."/>
            <person name="Maeda Y."/>
        </authorList>
    </citation>
    <scope>NUCLEOTIDE SEQUENCE [MRNA] (ISOFORMS FAST MUSCLE TYPE AND SLOW MUSCLE 1)</scope>
    <source>
        <tissue>Skeletal muscle</tissue>
    </source>
</reference>
<reference key="2">
    <citation type="journal article" date="1996" name="FEBS Lett.">
        <title>Production and crystallization of lobster muscle tropomyosin expressed in Sf9 cells.</title>
        <authorList>
            <person name="Miegel A."/>
            <person name="Sano K."/>
            <person name="Yamamoto K."/>
            <person name="Maeda K."/>
            <person name="Maeda Y."/>
            <person name="Taniguchi H."/>
            <person name="Yao M."/>
            <person name="Wakatsuki S."/>
        </authorList>
    </citation>
    <scope>X-RAY CRYSTALLOGRAPHY (3.0 ANGSTROMS)</scope>
</reference>
<organism>
    <name type="scientific">Homarus americanus</name>
    <name type="common">American lobster</name>
    <dbReference type="NCBI Taxonomy" id="6706"/>
    <lineage>
        <taxon>Eukaryota</taxon>
        <taxon>Metazoa</taxon>
        <taxon>Ecdysozoa</taxon>
        <taxon>Arthropoda</taxon>
        <taxon>Crustacea</taxon>
        <taxon>Multicrustacea</taxon>
        <taxon>Malacostraca</taxon>
        <taxon>Eumalacostraca</taxon>
        <taxon>Eucarida</taxon>
        <taxon>Decapoda</taxon>
        <taxon>Pleocyemata</taxon>
        <taxon>Astacidea</taxon>
        <taxon>Nephropoidea</taxon>
        <taxon>Nephropidae</taxon>
        <taxon>Homarus</taxon>
    </lineage>
</organism>
<name>TPM_HOMAM</name>
<feature type="chain" id="PRO_0000205674" description="Tropomyosin">
    <location>
        <begin position="1"/>
        <end position="284"/>
    </location>
</feature>
<feature type="region of interest" description="Disordered" evidence="2">
    <location>
        <begin position="1"/>
        <end position="39"/>
    </location>
</feature>
<feature type="coiled-coil region">
    <location>
        <begin position="1"/>
        <end position="284"/>
    </location>
</feature>
<feature type="compositionally biased region" description="Basic and acidic residues" evidence="2">
    <location>
        <begin position="12"/>
        <end position="39"/>
    </location>
</feature>
<feature type="splice variant" id="VSP_006615" description="In isoform Fast muscle type." evidence="3">
    <original>TEEEIRITHKKMQQVENELDQVQEQLSLANTKLEEKEKALQ</original>
    <variation>SEEEVHNLQKRMQQLENDLDQVQESLLKANTQLEEKDKALS</variation>
    <location>
        <begin position="39"/>
        <end position="79"/>
    </location>
</feature>
<accession>O44119</accession>
<accession>O44120</accession>
<keyword id="KW-0020">Allergen</keyword>
<keyword id="KW-0025">Alternative splicing</keyword>
<keyword id="KW-0175">Coiled coil</keyword>
<keyword id="KW-0677">Repeat</keyword>
<sequence>MDAIKKKMQAMKLEKDNAMDRADTLEQQNKEANIRAEKTEEEIRITHKKMQQVENELDQVQEQLSLANTKLEEKEKALQNAEGEVAALNRRIQLLEEDLERSEERLNTATTKLAEASQAADESERMRKVLENRSLSDEERMDALENQLKEARFLAEEADRKYDEVARKLAMVEADLERAEERAETGESKIVELEEELRVVGNNLKSLEVSEEKANQREEAYKEQIKTLANKLKAAEARAEFAERSVQKLQKEVDRLEDELVNEKEKYKSITDELDQTFSELSGY</sequence>
<comment type="function">
    <text>Tropomyosin, in association with the troponin complex, plays a central role in the calcium dependent regulation of muscle contraction.</text>
</comment>
<comment type="subunit">
    <text evidence="1">Homodimer.</text>
</comment>
<comment type="alternative products">
    <event type="alternative splicing"/>
    <isoform>
        <id>O44119-1</id>
        <name>Slow muscle 1</name>
        <name>STM1</name>
        <sequence type="displayed"/>
    </isoform>
    <isoform>
        <id>O44119-2</id>
        <name>Fast muscle type</name>
        <name>FTM</name>
        <sequence type="described" ref="VSP_006615"/>
    </isoform>
</comment>
<comment type="domain">
    <text>The molecule is in a coiled coil structure that is formed by 2 polypeptide chains. The sequence exhibits a prominent seven-residues periodicity.</text>
</comment>
<comment type="allergen">
    <text>Causes an allergic reaction in human.</text>
</comment>
<comment type="similarity">
    <text evidence="4">Belongs to the tropomyosin family.</text>
</comment>
<evidence type="ECO:0000250" key="1"/>
<evidence type="ECO:0000256" key="2">
    <source>
        <dbReference type="SAM" id="MobiDB-lite"/>
    </source>
</evidence>
<evidence type="ECO:0000303" key="3">
    <source>
    </source>
</evidence>
<evidence type="ECO:0000305" key="4"/>